<keyword id="KW-0963">Cytoplasm</keyword>
<keyword id="KW-0489">Methyltransferase</keyword>
<keyword id="KW-1185">Reference proteome</keyword>
<keyword id="KW-0698">rRNA processing</keyword>
<keyword id="KW-0949">S-adenosyl-L-methionine</keyword>
<keyword id="KW-0808">Transferase</keyword>
<name>RLMH_RUMCH</name>
<comment type="function">
    <text evidence="1">Specifically methylates the pseudouridine at position 1915 (m3Psi1915) in 23S rRNA.</text>
</comment>
<comment type="catalytic activity">
    <reaction evidence="1">
        <text>pseudouridine(1915) in 23S rRNA + S-adenosyl-L-methionine = N(3)-methylpseudouridine(1915) in 23S rRNA + S-adenosyl-L-homocysteine + H(+)</text>
        <dbReference type="Rhea" id="RHEA:42752"/>
        <dbReference type="Rhea" id="RHEA-COMP:10221"/>
        <dbReference type="Rhea" id="RHEA-COMP:10222"/>
        <dbReference type="ChEBI" id="CHEBI:15378"/>
        <dbReference type="ChEBI" id="CHEBI:57856"/>
        <dbReference type="ChEBI" id="CHEBI:59789"/>
        <dbReference type="ChEBI" id="CHEBI:65314"/>
        <dbReference type="ChEBI" id="CHEBI:74486"/>
        <dbReference type="EC" id="2.1.1.177"/>
    </reaction>
</comment>
<comment type="subunit">
    <text evidence="1">Homodimer.</text>
</comment>
<comment type="subcellular location">
    <subcellularLocation>
        <location evidence="1">Cytoplasm</location>
    </subcellularLocation>
</comment>
<comment type="similarity">
    <text evidence="1">Belongs to the RNA methyltransferase RlmH family.</text>
</comment>
<accession>B8I1P0</accession>
<dbReference type="EC" id="2.1.1.177" evidence="1"/>
<dbReference type="EMBL" id="CP001348">
    <property type="protein sequence ID" value="ACL77675.1"/>
    <property type="molecule type" value="Genomic_DNA"/>
</dbReference>
<dbReference type="RefSeq" id="WP_015926727.1">
    <property type="nucleotide sequence ID" value="NC_011898.1"/>
</dbReference>
<dbReference type="SMR" id="B8I1P0"/>
<dbReference type="STRING" id="394503.Ccel_3387"/>
<dbReference type="KEGG" id="cce:Ccel_3387"/>
<dbReference type="eggNOG" id="COG1576">
    <property type="taxonomic scope" value="Bacteria"/>
</dbReference>
<dbReference type="HOGENOM" id="CLU_100552_0_0_9"/>
<dbReference type="OrthoDB" id="9806643at2"/>
<dbReference type="Proteomes" id="UP000001349">
    <property type="component" value="Chromosome"/>
</dbReference>
<dbReference type="GO" id="GO:0005737">
    <property type="term" value="C:cytoplasm"/>
    <property type="evidence" value="ECO:0007669"/>
    <property type="project" value="UniProtKB-SubCell"/>
</dbReference>
<dbReference type="GO" id="GO:0070038">
    <property type="term" value="F:rRNA (pseudouridine-N3-)-methyltransferase activity"/>
    <property type="evidence" value="ECO:0007669"/>
    <property type="project" value="UniProtKB-UniRule"/>
</dbReference>
<dbReference type="CDD" id="cd18081">
    <property type="entry name" value="RlmH-like"/>
    <property type="match status" value="1"/>
</dbReference>
<dbReference type="Gene3D" id="3.40.1280.10">
    <property type="match status" value="1"/>
</dbReference>
<dbReference type="HAMAP" id="MF_00658">
    <property type="entry name" value="23SrRNA_methyltr_H"/>
    <property type="match status" value="1"/>
</dbReference>
<dbReference type="InterPro" id="IPR029028">
    <property type="entry name" value="Alpha/beta_knot_MTases"/>
</dbReference>
<dbReference type="InterPro" id="IPR003742">
    <property type="entry name" value="RlmH-like"/>
</dbReference>
<dbReference type="InterPro" id="IPR029026">
    <property type="entry name" value="tRNA_m1G_MTases_N"/>
</dbReference>
<dbReference type="NCBIfam" id="NF000985">
    <property type="entry name" value="PRK00103.1-3"/>
    <property type="match status" value="1"/>
</dbReference>
<dbReference type="PANTHER" id="PTHR33603">
    <property type="entry name" value="METHYLTRANSFERASE"/>
    <property type="match status" value="1"/>
</dbReference>
<dbReference type="PANTHER" id="PTHR33603:SF1">
    <property type="entry name" value="RIBOSOMAL RNA LARGE SUBUNIT METHYLTRANSFERASE H"/>
    <property type="match status" value="1"/>
</dbReference>
<dbReference type="Pfam" id="PF02590">
    <property type="entry name" value="SPOUT_MTase"/>
    <property type="match status" value="1"/>
</dbReference>
<dbReference type="PIRSF" id="PIRSF004505">
    <property type="entry name" value="MT_bac"/>
    <property type="match status" value="1"/>
</dbReference>
<dbReference type="SUPFAM" id="SSF75217">
    <property type="entry name" value="alpha/beta knot"/>
    <property type="match status" value="1"/>
</dbReference>
<gene>
    <name evidence="1" type="primary">rlmH</name>
    <name type="ordered locus">Ccel_3387</name>
</gene>
<reference key="1">
    <citation type="submission" date="2009-01" db="EMBL/GenBank/DDBJ databases">
        <title>Complete sequence of Clostridium cellulolyticum H10.</title>
        <authorList>
            <consortium name="US DOE Joint Genome Institute"/>
            <person name="Lucas S."/>
            <person name="Copeland A."/>
            <person name="Lapidus A."/>
            <person name="Glavina del Rio T."/>
            <person name="Dalin E."/>
            <person name="Tice H."/>
            <person name="Bruce D."/>
            <person name="Goodwin L."/>
            <person name="Pitluck S."/>
            <person name="Chertkov O."/>
            <person name="Saunders E."/>
            <person name="Brettin T."/>
            <person name="Detter J.C."/>
            <person name="Han C."/>
            <person name="Larimer F."/>
            <person name="Land M."/>
            <person name="Hauser L."/>
            <person name="Kyrpides N."/>
            <person name="Ivanova N."/>
            <person name="Zhou J."/>
            <person name="Richardson P."/>
        </authorList>
    </citation>
    <scope>NUCLEOTIDE SEQUENCE [LARGE SCALE GENOMIC DNA]</scope>
    <source>
        <strain>ATCC 35319 / DSM 5812 / JCM 6584 / H10</strain>
    </source>
</reference>
<sequence length="159" mass="18006">MKITIAAVGKLKEKYLKEAVSEYSKRLSRFTEIEIIEVDDEYAPDSLSVAQESQVKKKEAERLLKRVKQGSYVVLLDLAGEQTTSSGFSAKLENVMLSGNSHITFIIGGSLGLDQSLIKVADYRLCLSKMTYPHQLARVILMEQIYRAFKIIKNETYHK</sequence>
<organism>
    <name type="scientific">Ruminiclostridium cellulolyticum (strain ATCC 35319 / DSM 5812 / JCM 6584 / H10)</name>
    <name type="common">Clostridium cellulolyticum</name>
    <dbReference type="NCBI Taxonomy" id="394503"/>
    <lineage>
        <taxon>Bacteria</taxon>
        <taxon>Bacillati</taxon>
        <taxon>Bacillota</taxon>
        <taxon>Clostridia</taxon>
        <taxon>Eubacteriales</taxon>
        <taxon>Oscillospiraceae</taxon>
        <taxon>Ruminiclostridium</taxon>
    </lineage>
</organism>
<evidence type="ECO:0000255" key="1">
    <source>
        <dbReference type="HAMAP-Rule" id="MF_00658"/>
    </source>
</evidence>
<protein>
    <recommendedName>
        <fullName evidence="1">Ribosomal RNA large subunit methyltransferase H</fullName>
        <ecNumber evidence="1">2.1.1.177</ecNumber>
    </recommendedName>
    <alternativeName>
        <fullName evidence="1">23S rRNA (pseudouridine1915-N3)-methyltransferase</fullName>
    </alternativeName>
    <alternativeName>
        <fullName evidence="1">23S rRNA m3Psi1915 methyltransferase</fullName>
    </alternativeName>
    <alternativeName>
        <fullName evidence="1">rRNA (pseudouridine-N3-)-methyltransferase RlmH</fullName>
    </alternativeName>
</protein>
<proteinExistence type="inferred from homology"/>
<feature type="chain" id="PRO_1000147542" description="Ribosomal RNA large subunit methyltransferase H">
    <location>
        <begin position="1"/>
        <end position="159"/>
    </location>
</feature>
<feature type="binding site" evidence="1">
    <location>
        <position position="76"/>
    </location>
    <ligand>
        <name>S-adenosyl-L-methionine</name>
        <dbReference type="ChEBI" id="CHEBI:59789"/>
    </ligand>
</feature>
<feature type="binding site" evidence="1">
    <location>
        <position position="108"/>
    </location>
    <ligand>
        <name>S-adenosyl-L-methionine</name>
        <dbReference type="ChEBI" id="CHEBI:59789"/>
    </ligand>
</feature>
<feature type="binding site" evidence="1">
    <location>
        <begin position="127"/>
        <end position="132"/>
    </location>
    <ligand>
        <name>S-adenosyl-L-methionine</name>
        <dbReference type="ChEBI" id="CHEBI:59789"/>
    </ligand>
</feature>